<proteinExistence type="inferred from homology"/>
<sequence length="308" mass="34487">MPKQCRHLLQTSDLSMDEIKLLLKKASVYANDFNAVSLEVKEKIHNKIIVALFFENSTRTVSSFEIASLRLGAKMVKLNMQTSSTSKGETLIDTFKNIHAMQPDAIIMRHAFSSAPFKLVEFSQCPLINAGSGTSAHPTQALLDLLTLYQHFGSLENLKGKKIAFIGDVKNSRVANSNIKLLQRLGLEIMLCAPSSMLPSTPLIKTTHHIGEAIEFADILMSLRTQTERHNTPIFASLKDYANAYCITQKRLYDHAKNKEVVILHPGPVHRDIDIESTMLEDRRSKVLEQVKNGVAMRMAVLEFLLVD</sequence>
<gene>
    <name evidence="1" type="primary">pyrB</name>
    <name type="ordered locus">Hac_0799</name>
</gene>
<accession>Q17XN9</accession>
<reference key="1">
    <citation type="journal article" date="2006" name="PLoS Genet.">
        <title>Who ate whom? Adaptive Helicobacter genomic changes that accompanied a host jump from early humans to large felines.</title>
        <authorList>
            <person name="Eppinger M."/>
            <person name="Baar C."/>
            <person name="Linz B."/>
            <person name="Raddatz G."/>
            <person name="Lanz C."/>
            <person name="Keller H."/>
            <person name="Morelli G."/>
            <person name="Gressmann H."/>
            <person name="Achtman M."/>
            <person name="Schuster S.C."/>
        </authorList>
    </citation>
    <scope>NUCLEOTIDE SEQUENCE [LARGE SCALE GENOMIC DNA]</scope>
    <source>
        <strain>Sheeba</strain>
    </source>
</reference>
<comment type="function">
    <text evidence="1">Catalyzes the condensation of carbamoyl phosphate and aspartate to form carbamoyl aspartate and inorganic phosphate, the committed step in the de novo pyrimidine nucleotide biosynthesis pathway.</text>
</comment>
<comment type="catalytic activity">
    <reaction evidence="1">
        <text>carbamoyl phosphate + L-aspartate = N-carbamoyl-L-aspartate + phosphate + H(+)</text>
        <dbReference type="Rhea" id="RHEA:20013"/>
        <dbReference type="ChEBI" id="CHEBI:15378"/>
        <dbReference type="ChEBI" id="CHEBI:29991"/>
        <dbReference type="ChEBI" id="CHEBI:32814"/>
        <dbReference type="ChEBI" id="CHEBI:43474"/>
        <dbReference type="ChEBI" id="CHEBI:58228"/>
        <dbReference type="EC" id="2.1.3.2"/>
    </reaction>
</comment>
<comment type="pathway">
    <text evidence="1">Pyrimidine metabolism; UMP biosynthesis via de novo pathway; (S)-dihydroorotate from bicarbonate: step 2/3.</text>
</comment>
<comment type="subunit">
    <text evidence="1">Heterododecamer (2C3:3R2) of six catalytic PyrB chains organized as two trimers (C3), and six regulatory PyrI chains organized as three dimers (R2).</text>
</comment>
<comment type="similarity">
    <text evidence="1">Belongs to the aspartate/ornithine carbamoyltransferase superfamily. ATCase family.</text>
</comment>
<feature type="chain" id="PRO_0000301578" description="Aspartate carbamoyltransferase catalytic subunit">
    <location>
        <begin position="1"/>
        <end position="308"/>
    </location>
</feature>
<feature type="binding site" evidence="1">
    <location>
        <position position="59"/>
    </location>
    <ligand>
        <name>carbamoyl phosphate</name>
        <dbReference type="ChEBI" id="CHEBI:58228"/>
    </ligand>
</feature>
<feature type="binding site" evidence="1">
    <location>
        <position position="60"/>
    </location>
    <ligand>
        <name>carbamoyl phosphate</name>
        <dbReference type="ChEBI" id="CHEBI:58228"/>
    </ligand>
</feature>
<feature type="binding site" evidence="1">
    <location>
        <position position="87"/>
    </location>
    <ligand>
        <name>L-aspartate</name>
        <dbReference type="ChEBI" id="CHEBI:29991"/>
    </ligand>
</feature>
<feature type="binding site" evidence="1">
    <location>
        <position position="109"/>
    </location>
    <ligand>
        <name>carbamoyl phosphate</name>
        <dbReference type="ChEBI" id="CHEBI:58228"/>
    </ligand>
</feature>
<feature type="binding site" evidence="1">
    <location>
        <position position="137"/>
    </location>
    <ligand>
        <name>carbamoyl phosphate</name>
        <dbReference type="ChEBI" id="CHEBI:58228"/>
    </ligand>
</feature>
<feature type="binding site" evidence="1">
    <location>
        <position position="140"/>
    </location>
    <ligand>
        <name>carbamoyl phosphate</name>
        <dbReference type="ChEBI" id="CHEBI:58228"/>
    </ligand>
</feature>
<feature type="binding site" evidence="1">
    <location>
        <position position="173"/>
    </location>
    <ligand>
        <name>L-aspartate</name>
        <dbReference type="ChEBI" id="CHEBI:29991"/>
    </ligand>
</feature>
<feature type="binding site" evidence="1">
    <location>
        <position position="224"/>
    </location>
    <ligand>
        <name>L-aspartate</name>
        <dbReference type="ChEBI" id="CHEBI:29991"/>
    </ligand>
</feature>
<feature type="binding site" evidence="1">
    <location>
        <position position="267"/>
    </location>
    <ligand>
        <name>carbamoyl phosphate</name>
        <dbReference type="ChEBI" id="CHEBI:58228"/>
    </ligand>
</feature>
<feature type="binding site" evidence="1">
    <location>
        <position position="268"/>
    </location>
    <ligand>
        <name>carbamoyl phosphate</name>
        <dbReference type="ChEBI" id="CHEBI:58228"/>
    </ligand>
</feature>
<protein>
    <recommendedName>
        <fullName evidence="1">Aspartate carbamoyltransferase catalytic subunit</fullName>
        <ecNumber evidence="1">2.1.3.2</ecNumber>
    </recommendedName>
    <alternativeName>
        <fullName evidence="1">Aspartate transcarbamylase</fullName>
        <shortName evidence="1">ATCase</shortName>
    </alternativeName>
</protein>
<organism>
    <name type="scientific">Helicobacter acinonychis (strain Sheeba)</name>
    <dbReference type="NCBI Taxonomy" id="382638"/>
    <lineage>
        <taxon>Bacteria</taxon>
        <taxon>Pseudomonadati</taxon>
        <taxon>Campylobacterota</taxon>
        <taxon>Epsilonproteobacteria</taxon>
        <taxon>Campylobacterales</taxon>
        <taxon>Helicobacteraceae</taxon>
        <taxon>Helicobacter</taxon>
    </lineage>
</organism>
<dbReference type="EC" id="2.1.3.2" evidence="1"/>
<dbReference type="EMBL" id="AM260522">
    <property type="protein sequence ID" value="CAJ99587.1"/>
    <property type="molecule type" value="Genomic_DNA"/>
</dbReference>
<dbReference type="RefSeq" id="WP_011577700.1">
    <property type="nucleotide sequence ID" value="NC_008229.1"/>
</dbReference>
<dbReference type="SMR" id="Q17XN9"/>
<dbReference type="STRING" id="382638.Hac_0799"/>
<dbReference type="GeneID" id="31758223"/>
<dbReference type="KEGG" id="hac:Hac_0799"/>
<dbReference type="eggNOG" id="COG0540">
    <property type="taxonomic scope" value="Bacteria"/>
</dbReference>
<dbReference type="HOGENOM" id="CLU_043846_2_0_7"/>
<dbReference type="OrthoDB" id="9774690at2"/>
<dbReference type="BioCyc" id="HACI382638:HAC_RS03455-MONOMER"/>
<dbReference type="UniPathway" id="UPA00070">
    <property type="reaction ID" value="UER00116"/>
</dbReference>
<dbReference type="Proteomes" id="UP000000775">
    <property type="component" value="Chromosome"/>
</dbReference>
<dbReference type="GO" id="GO:0005829">
    <property type="term" value="C:cytosol"/>
    <property type="evidence" value="ECO:0007669"/>
    <property type="project" value="TreeGrafter"/>
</dbReference>
<dbReference type="GO" id="GO:0016597">
    <property type="term" value="F:amino acid binding"/>
    <property type="evidence" value="ECO:0007669"/>
    <property type="project" value="InterPro"/>
</dbReference>
<dbReference type="GO" id="GO:0004070">
    <property type="term" value="F:aspartate carbamoyltransferase activity"/>
    <property type="evidence" value="ECO:0007669"/>
    <property type="project" value="UniProtKB-UniRule"/>
</dbReference>
<dbReference type="GO" id="GO:0006207">
    <property type="term" value="P:'de novo' pyrimidine nucleobase biosynthetic process"/>
    <property type="evidence" value="ECO:0007669"/>
    <property type="project" value="InterPro"/>
</dbReference>
<dbReference type="GO" id="GO:0044205">
    <property type="term" value="P:'de novo' UMP biosynthetic process"/>
    <property type="evidence" value="ECO:0007669"/>
    <property type="project" value="UniProtKB-UniRule"/>
</dbReference>
<dbReference type="GO" id="GO:0006520">
    <property type="term" value="P:amino acid metabolic process"/>
    <property type="evidence" value="ECO:0007669"/>
    <property type="project" value="InterPro"/>
</dbReference>
<dbReference type="Gene3D" id="3.40.50.1370">
    <property type="entry name" value="Aspartate/ornithine carbamoyltransferase"/>
    <property type="match status" value="2"/>
</dbReference>
<dbReference type="HAMAP" id="MF_00001">
    <property type="entry name" value="Asp_carb_tr"/>
    <property type="match status" value="1"/>
</dbReference>
<dbReference type="InterPro" id="IPR006132">
    <property type="entry name" value="Asp/Orn_carbamoyltranf_P-bd"/>
</dbReference>
<dbReference type="InterPro" id="IPR006130">
    <property type="entry name" value="Asp/Orn_carbamoylTrfase"/>
</dbReference>
<dbReference type="InterPro" id="IPR036901">
    <property type="entry name" value="Asp/Orn_carbamoylTrfase_sf"/>
</dbReference>
<dbReference type="InterPro" id="IPR002082">
    <property type="entry name" value="Asp_carbamoyltransf"/>
</dbReference>
<dbReference type="InterPro" id="IPR006131">
    <property type="entry name" value="Asp_carbamoyltransf_Asp/Orn-bd"/>
</dbReference>
<dbReference type="NCBIfam" id="TIGR00670">
    <property type="entry name" value="asp_carb_tr"/>
    <property type="match status" value="1"/>
</dbReference>
<dbReference type="NCBIfam" id="NF002032">
    <property type="entry name" value="PRK00856.1"/>
    <property type="match status" value="1"/>
</dbReference>
<dbReference type="PANTHER" id="PTHR45753:SF6">
    <property type="entry name" value="ASPARTATE CARBAMOYLTRANSFERASE"/>
    <property type="match status" value="1"/>
</dbReference>
<dbReference type="PANTHER" id="PTHR45753">
    <property type="entry name" value="ORNITHINE CARBAMOYLTRANSFERASE, MITOCHONDRIAL"/>
    <property type="match status" value="1"/>
</dbReference>
<dbReference type="Pfam" id="PF00185">
    <property type="entry name" value="OTCace"/>
    <property type="match status" value="1"/>
</dbReference>
<dbReference type="Pfam" id="PF02729">
    <property type="entry name" value="OTCace_N"/>
    <property type="match status" value="1"/>
</dbReference>
<dbReference type="PRINTS" id="PR00100">
    <property type="entry name" value="AOTCASE"/>
</dbReference>
<dbReference type="PRINTS" id="PR00101">
    <property type="entry name" value="ATCASE"/>
</dbReference>
<dbReference type="SUPFAM" id="SSF53671">
    <property type="entry name" value="Aspartate/ornithine carbamoyltransferase"/>
    <property type="match status" value="1"/>
</dbReference>
<dbReference type="PROSITE" id="PS00097">
    <property type="entry name" value="CARBAMOYLTRANSFERASE"/>
    <property type="match status" value="1"/>
</dbReference>
<name>PYRB_HELAH</name>
<keyword id="KW-0665">Pyrimidine biosynthesis</keyword>
<keyword id="KW-0808">Transferase</keyword>
<evidence type="ECO:0000255" key="1">
    <source>
        <dbReference type="HAMAP-Rule" id="MF_00001"/>
    </source>
</evidence>